<accession>A0RXV0</accession>
<feature type="chain" id="PRO_0000460388" description="Transcription termination factor FttA">
    <location>
        <begin position="1"/>
        <end position="645"/>
    </location>
</feature>
<feature type="region of interest" description="KHa" evidence="1">
    <location>
        <begin position="10"/>
        <end position="77"/>
    </location>
</feature>
<feature type="region of interest" description="KHb" evidence="1">
    <location>
        <begin position="78"/>
        <end position="146"/>
    </location>
</feature>
<feature type="region of interest" description="Metallo-beta-lactamase N-terminus" evidence="1">
    <location>
        <begin position="187"/>
        <end position="391"/>
    </location>
</feature>
<feature type="region of interest" description="Beta-Casp" evidence="1">
    <location>
        <begin position="392"/>
        <end position="586"/>
    </location>
</feature>
<feature type="region of interest" description="Metallo-beta-lactamase C-terminus" evidence="1">
    <location>
        <begin position="587"/>
        <end position="645"/>
    </location>
</feature>
<feature type="binding site" evidence="1">
    <location>
        <position position="250"/>
    </location>
    <ligand>
        <name>Zn(2+)</name>
        <dbReference type="ChEBI" id="CHEBI:29105"/>
        <label>1</label>
    </ligand>
</feature>
<feature type="binding site" evidence="1">
    <location>
        <position position="252"/>
    </location>
    <ligand>
        <name>Zn(2+)</name>
        <dbReference type="ChEBI" id="CHEBI:29105"/>
        <label>1</label>
    </ligand>
</feature>
<feature type="binding site" evidence="1">
    <location>
        <position position="254"/>
    </location>
    <ligand>
        <name>Zn(2+)</name>
        <dbReference type="ChEBI" id="CHEBI:29105"/>
        <label>2</label>
    </ligand>
</feature>
<feature type="binding site" evidence="1">
    <location>
        <position position="255"/>
    </location>
    <ligand>
        <name>Zn(2+)</name>
        <dbReference type="ChEBI" id="CHEBI:29105"/>
        <label>2</label>
    </ligand>
</feature>
<feature type="binding site" evidence="1">
    <location>
        <position position="337"/>
    </location>
    <ligand>
        <name>Zn(2+)</name>
        <dbReference type="ChEBI" id="CHEBI:29105"/>
        <label>1</label>
    </ligand>
</feature>
<feature type="binding site" evidence="1">
    <location>
        <position position="360"/>
    </location>
    <ligand>
        <name>Zn(2+)</name>
        <dbReference type="ChEBI" id="CHEBI:29105"/>
        <label>1</label>
    </ligand>
</feature>
<feature type="binding site" evidence="1">
    <location>
        <position position="360"/>
    </location>
    <ligand>
        <name>Zn(2+)</name>
        <dbReference type="ChEBI" id="CHEBI:29105"/>
        <label>2</label>
    </ligand>
</feature>
<feature type="binding site" evidence="1">
    <location>
        <position position="612"/>
    </location>
    <ligand>
        <name>Zn(2+)</name>
        <dbReference type="ChEBI" id="CHEBI:29105"/>
        <label>2</label>
    </ligand>
</feature>
<gene>
    <name evidence="1" type="primary">fttA</name>
    <name evidence="6" type="ordered locus">CENSYa_1545</name>
</gene>
<organism>
    <name type="scientific">Cenarchaeum symbiosum (strain A)</name>
    <dbReference type="NCBI Taxonomy" id="414004"/>
    <lineage>
        <taxon>Archaea</taxon>
        <taxon>Nitrososphaerota</taxon>
        <taxon>Candidatus Cenarchaeales</taxon>
        <taxon>Candidatus Cenarchaeaceae</taxon>
        <taxon>Candidatus Cenarchaeum</taxon>
    </lineage>
</organism>
<name>FTTA_CENSY</name>
<comment type="function">
    <text evidence="1">Terminates transcription on the whole genome. Termination is linked to FttA-mediated RNA cleavage and does not require NTP hydrolysis. Cleaves endonucleolytically at the RNA exit channel of RNA polymerase (RNAP); the 5'-3' exonuclease activity of this protein degrades the nascent RNA released from RNAP.</text>
</comment>
<comment type="function">
    <text evidence="2 3 5">Terminates transcription genome-wide in M.maripaludis (PubMed:32857850, PubMed:34964713). Restores wild-type growth to a strain of Methanococcus maripaludis depleted for this gene at 22 degrees Celsius and prevents transcriptional read-through (PubMed:32857850). Transcription termination is most effective in vivo on RNAs with more than one U4-tract in their 3'-ends (PubMed:34964713). Has endonuclease activity after U-rich tracts in transcription termination sequences (Probable) (PubMed:32857850).</text>
</comment>
<comment type="cofactor">
    <cofactor evidence="1">
        <name>Zn(2+)</name>
        <dbReference type="ChEBI" id="CHEBI:29105"/>
    </cofactor>
    <text evidence="1">Binds 2 Zn(2+) ions, which are required for nuclease activity.</text>
</comment>
<comment type="subunit">
    <text evidence="1">Homodimer. Interacts with RNA polymerase (RNAP), interacts with the Spt4-Spt5 complex.</text>
</comment>
<comment type="similarity">
    <text evidence="1">Belongs to the metallo-beta-lactamase superfamily. RNA-metabolizing metallo-beta-lactamase-like family. FttA subfamily.</text>
</comment>
<protein>
    <recommendedName>
        <fullName evidence="1">Transcription termination factor FttA</fullName>
        <ecNumber evidence="1 5">3.1.-.-</ecNumber>
    </recommendedName>
    <alternativeName>
        <fullName evidence="4">Ribonuclease aCPSF1</fullName>
    </alternativeName>
</protein>
<proteinExistence type="inferred from homology"/>
<sequence length="645" mass="71821">MQRRQQQKEAPSNQNIMATILGSIPREAGVTKIEYEGPRIALYTNTPRYLLEHNEIISNLVNVIKKRIIVRIDESVRKKEEDARKMLSKLVPAEAKLQGTFFDTTTGEVSLEAKRPWLLQRNSAEFSHADVSEKIGWTLRIRKATTSQSSTMQVINRTLRASSIERGKQLKQIGDDIFRPKLATRSEISLTALGGFGQVGRSCMLLSTLDSKVLVDCGVNPGAAHPSESYPRLDWAGITLDDLDAVVIGHAHLDHTGFLPVLAKYGYRGPIYCTEPTLPMMNLIQLDAIKVATAQGRVPVYAERDVRQIMRQAITLPYGTVTDISPDIKLVLANAGHILGSALCHFHIGSGDHNFVYSGDIKFGKSILFEAASWNFPRVETLLIESTYGAKEDIQPTRQEVESAFINAVNGALADGGKVLIPIPAVGRAQEIMMVIDHYMKSGEMAEAPVFTEGMISEASAIHEAHPEYLARELKQKILETDDNPFDSEYFTNVEHADGRDEALRDGSPCIILATSGMLEGGPVLEYFKSIAPHKQNKILFVSYQVNGTLGRRVLDGARQVPLMNRGGKIEVVNIECRMEKLDGFSGHSDYNQLTGFVQKLRPKLRRVLVNHGERRKSENLALAVRRMFRIPAHYPQIQESIKLF</sequence>
<dbReference type="EC" id="3.1.-.-" evidence="1 5"/>
<dbReference type="EMBL" id="DP000238">
    <property type="protein sequence ID" value="ABK78167.1"/>
    <property type="molecule type" value="Genomic_DNA"/>
</dbReference>
<dbReference type="SMR" id="A0RXV0"/>
<dbReference type="STRING" id="414004.CENSYa_1545"/>
<dbReference type="EnsemblBacteria" id="ABK78167">
    <property type="protein sequence ID" value="ABK78167"/>
    <property type="gene ID" value="CENSYa_1545"/>
</dbReference>
<dbReference type="KEGG" id="csy:CENSYa_1545"/>
<dbReference type="PATRIC" id="fig|414004.10.peg.1414"/>
<dbReference type="HOGENOM" id="CLU_009673_5_1_2"/>
<dbReference type="Proteomes" id="UP000000758">
    <property type="component" value="Chromosome"/>
</dbReference>
<dbReference type="GO" id="GO:0003677">
    <property type="term" value="F:DNA binding"/>
    <property type="evidence" value="ECO:0007669"/>
    <property type="project" value="UniProtKB-KW"/>
</dbReference>
<dbReference type="GO" id="GO:0004527">
    <property type="term" value="F:exonuclease activity"/>
    <property type="evidence" value="ECO:0007669"/>
    <property type="project" value="UniProtKB-KW"/>
</dbReference>
<dbReference type="GO" id="GO:0046872">
    <property type="term" value="F:metal ion binding"/>
    <property type="evidence" value="ECO:0007669"/>
    <property type="project" value="UniProtKB-KW"/>
</dbReference>
<dbReference type="GO" id="GO:0003723">
    <property type="term" value="F:RNA binding"/>
    <property type="evidence" value="ECO:0007669"/>
    <property type="project" value="UniProtKB-KW"/>
</dbReference>
<dbReference type="GO" id="GO:0004521">
    <property type="term" value="F:RNA endonuclease activity"/>
    <property type="evidence" value="ECO:0007669"/>
    <property type="project" value="TreeGrafter"/>
</dbReference>
<dbReference type="GO" id="GO:0006353">
    <property type="term" value="P:DNA-templated transcription termination"/>
    <property type="evidence" value="ECO:0000316"/>
    <property type="project" value="UniProtKB"/>
</dbReference>
<dbReference type="CDD" id="cd22532">
    <property type="entry name" value="KH-II_CPSF_arch_rpt1"/>
    <property type="match status" value="1"/>
</dbReference>
<dbReference type="CDD" id="cd16295">
    <property type="entry name" value="TTHA0252-CPSF-like_MBL-fold"/>
    <property type="match status" value="1"/>
</dbReference>
<dbReference type="Gene3D" id="3.30.300.20">
    <property type="match status" value="1"/>
</dbReference>
<dbReference type="Gene3D" id="3.30.300.230">
    <property type="match status" value="1"/>
</dbReference>
<dbReference type="Gene3D" id="3.40.50.10890">
    <property type="match status" value="1"/>
</dbReference>
<dbReference type="Gene3D" id="3.60.15.10">
    <property type="entry name" value="Ribonuclease Z/Hydroxyacylglutathione hydrolase-like"/>
    <property type="match status" value="1"/>
</dbReference>
<dbReference type="HAMAP" id="MF_00870">
    <property type="entry name" value="FttA"/>
    <property type="match status" value="1"/>
</dbReference>
<dbReference type="InterPro" id="IPR019975">
    <property type="entry name" value="aCPSF1"/>
</dbReference>
<dbReference type="InterPro" id="IPR022712">
    <property type="entry name" value="Beta_Casp"/>
</dbReference>
<dbReference type="InterPro" id="IPR015946">
    <property type="entry name" value="KH_dom-like_a/b"/>
</dbReference>
<dbReference type="InterPro" id="IPR050698">
    <property type="entry name" value="MBL"/>
</dbReference>
<dbReference type="InterPro" id="IPR001279">
    <property type="entry name" value="Metallo-B-lactamas"/>
</dbReference>
<dbReference type="InterPro" id="IPR036866">
    <property type="entry name" value="RibonucZ/Hydroxyglut_hydro"/>
</dbReference>
<dbReference type="InterPro" id="IPR011108">
    <property type="entry name" value="RMMBL"/>
</dbReference>
<dbReference type="InterPro" id="IPR033769">
    <property type="entry name" value="TffA_KH"/>
</dbReference>
<dbReference type="NCBIfam" id="TIGR03675">
    <property type="entry name" value="arCOG00543"/>
    <property type="match status" value="1"/>
</dbReference>
<dbReference type="PANTHER" id="PTHR11203:SF51">
    <property type="entry name" value="CLEAVAGE AND POLYADENYLATION SPECIFICITY FACTOR"/>
    <property type="match status" value="1"/>
</dbReference>
<dbReference type="PANTHER" id="PTHR11203">
    <property type="entry name" value="CLEAVAGE AND POLYADENYLATION SPECIFICITY FACTOR FAMILY MEMBER"/>
    <property type="match status" value="1"/>
</dbReference>
<dbReference type="Pfam" id="PF10996">
    <property type="entry name" value="Beta-Casp"/>
    <property type="match status" value="1"/>
</dbReference>
<dbReference type="Pfam" id="PF17214">
    <property type="entry name" value="KH_TffA"/>
    <property type="match status" value="1"/>
</dbReference>
<dbReference type="Pfam" id="PF00753">
    <property type="entry name" value="Lactamase_B"/>
    <property type="match status" value="1"/>
</dbReference>
<dbReference type="Pfam" id="PF07521">
    <property type="entry name" value="RMMBL"/>
    <property type="match status" value="1"/>
</dbReference>
<dbReference type="SMART" id="SM01027">
    <property type="entry name" value="Beta-Casp"/>
    <property type="match status" value="1"/>
</dbReference>
<dbReference type="SMART" id="SM00849">
    <property type="entry name" value="Lactamase_B"/>
    <property type="match status" value="1"/>
</dbReference>
<dbReference type="SUPFAM" id="SSF56281">
    <property type="entry name" value="Metallo-hydrolase/oxidoreductase"/>
    <property type="match status" value="1"/>
</dbReference>
<keyword id="KW-0238">DNA-binding</keyword>
<keyword id="KW-0255">Endonuclease</keyword>
<keyword id="KW-0269">Exonuclease</keyword>
<keyword id="KW-0378">Hydrolase</keyword>
<keyword id="KW-0479">Metal-binding</keyword>
<keyword id="KW-0540">Nuclease</keyword>
<keyword id="KW-1185">Reference proteome</keyword>
<keyword id="KW-0694">RNA-binding</keyword>
<keyword id="KW-0804">Transcription</keyword>
<keyword id="KW-0805">Transcription regulation</keyword>
<keyword id="KW-0806">Transcription termination</keyword>
<keyword id="KW-0862">Zinc</keyword>
<evidence type="ECO:0000255" key="1">
    <source>
        <dbReference type="HAMAP-Rule" id="MF_00870"/>
    </source>
</evidence>
<evidence type="ECO:0000269" key="2">
    <source>
    </source>
</evidence>
<evidence type="ECO:0000269" key="3">
    <source>
    </source>
</evidence>
<evidence type="ECO:0000303" key="4">
    <source>
    </source>
</evidence>
<evidence type="ECO:0000305" key="5">
    <source>
    </source>
</evidence>
<evidence type="ECO:0000312" key="6">
    <source>
        <dbReference type="EMBL" id="ABK78167.1"/>
    </source>
</evidence>
<reference evidence="6" key="1">
    <citation type="journal article" date="2006" name="Proc. Natl. Acad. Sci. U.S.A.">
        <title>Genomic analysis of the uncultivated marine crenarchaeote Cenarchaeum symbiosum.</title>
        <authorList>
            <person name="Hallam S.J."/>
            <person name="Konstantinidis K.T."/>
            <person name="Putnam N."/>
            <person name="Schleper C."/>
            <person name="Watanabe Y."/>
            <person name="Sugahara J."/>
            <person name="Preston C."/>
            <person name="de la Torre J."/>
            <person name="Richardson P.M."/>
            <person name="DeLong E.F."/>
        </authorList>
    </citation>
    <scope>NUCLEOTIDE SEQUENCE [LARGE SCALE GENOMIC DNA]</scope>
    <source>
        <strain>A</strain>
    </source>
</reference>
<reference key="2">
    <citation type="journal article" date="2020" name="Nucleic Acids Res.">
        <title>The conserved ribonuclease aCPSF1 triggers genome-wide transcription termination of Archaea via a 3'-end cleavage mode.</title>
        <authorList>
            <person name="Yue L."/>
            <person name="Li J."/>
            <person name="Zhang B."/>
            <person name="Qi L."/>
            <person name="Li Z."/>
            <person name="Zhao F."/>
            <person name="Li L."/>
            <person name="Zheng X."/>
            <person name="Dong X."/>
        </authorList>
    </citation>
    <scope>FUNCTION</scope>
    <source>
        <strain>A</strain>
    </source>
</reference>
<reference key="3">
    <citation type="journal article" date="2021" name="Elife">
        <title>aCPSF1 cooperates with terminator U-tract to dictate archaeal transcription termination efficacy.</title>
        <authorList>
            <person name="Li J."/>
            <person name="Yue L."/>
            <person name="Li Z."/>
            <person name="Zhang W."/>
            <person name="Zhang B."/>
            <person name="Zhao F."/>
            <person name="Dong X."/>
        </authorList>
    </citation>
    <scope>FUNCTION</scope>
    <source>
        <strain>A</strain>
    </source>
</reference>